<dbReference type="EC" id="6.3.4.18" evidence="1"/>
<dbReference type="EMBL" id="BX571857">
    <property type="protein sequence ID" value="CAG42775.1"/>
    <property type="molecule type" value="Genomic_DNA"/>
</dbReference>
<dbReference type="RefSeq" id="WP_000009495.1">
    <property type="nucleotide sequence ID" value="NC_002953.3"/>
</dbReference>
<dbReference type="SMR" id="Q6GAE8"/>
<dbReference type="KEGG" id="sas:SAS1001"/>
<dbReference type="HOGENOM" id="CLU_011534_0_1_9"/>
<dbReference type="UniPathway" id="UPA00074">
    <property type="reaction ID" value="UER00942"/>
</dbReference>
<dbReference type="PHI-base" id="PHI:10553"/>
<dbReference type="GO" id="GO:0005829">
    <property type="term" value="C:cytosol"/>
    <property type="evidence" value="ECO:0007669"/>
    <property type="project" value="TreeGrafter"/>
</dbReference>
<dbReference type="GO" id="GO:0034028">
    <property type="term" value="F:5-(carboxyamino)imidazole ribonucleotide synthase activity"/>
    <property type="evidence" value="ECO:0007669"/>
    <property type="project" value="UniProtKB-UniRule"/>
</dbReference>
<dbReference type="GO" id="GO:0005524">
    <property type="term" value="F:ATP binding"/>
    <property type="evidence" value="ECO:0007669"/>
    <property type="project" value="UniProtKB-KW"/>
</dbReference>
<dbReference type="GO" id="GO:0046872">
    <property type="term" value="F:metal ion binding"/>
    <property type="evidence" value="ECO:0007669"/>
    <property type="project" value="InterPro"/>
</dbReference>
<dbReference type="GO" id="GO:0004638">
    <property type="term" value="F:phosphoribosylaminoimidazole carboxylase activity"/>
    <property type="evidence" value="ECO:0007669"/>
    <property type="project" value="InterPro"/>
</dbReference>
<dbReference type="GO" id="GO:0006189">
    <property type="term" value="P:'de novo' IMP biosynthetic process"/>
    <property type="evidence" value="ECO:0007669"/>
    <property type="project" value="UniProtKB-UniRule"/>
</dbReference>
<dbReference type="FunFam" id="3.30.1490.20:FF:000015">
    <property type="entry name" value="N5-carboxyaminoimidazole ribonucleotide synthase"/>
    <property type="match status" value="1"/>
</dbReference>
<dbReference type="FunFam" id="3.40.50.20:FF:000016">
    <property type="entry name" value="N5-carboxyaminoimidazole ribonucleotide synthase"/>
    <property type="match status" value="1"/>
</dbReference>
<dbReference type="Gene3D" id="3.40.50.20">
    <property type="match status" value="1"/>
</dbReference>
<dbReference type="Gene3D" id="3.30.1490.20">
    <property type="entry name" value="ATP-grasp fold, A domain"/>
    <property type="match status" value="1"/>
</dbReference>
<dbReference type="Gene3D" id="3.30.470.20">
    <property type="entry name" value="ATP-grasp fold, B domain"/>
    <property type="match status" value="1"/>
</dbReference>
<dbReference type="HAMAP" id="MF_01928">
    <property type="entry name" value="PurK"/>
    <property type="match status" value="1"/>
</dbReference>
<dbReference type="InterPro" id="IPR011761">
    <property type="entry name" value="ATP-grasp"/>
</dbReference>
<dbReference type="InterPro" id="IPR003135">
    <property type="entry name" value="ATP-grasp_carboxylate-amine"/>
</dbReference>
<dbReference type="InterPro" id="IPR013815">
    <property type="entry name" value="ATP_grasp_subdomain_1"/>
</dbReference>
<dbReference type="InterPro" id="IPR016185">
    <property type="entry name" value="PreATP-grasp_dom_sf"/>
</dbReference>
<dbReference type="InterPro" id="IPR005875">
    <property type="entry name" value="PurK"/>
</dbReference>
<dbReference type="InterPro" id="IPR040686">
    <property type="entry name" value="PurK_C"/>
</dbReference>
<dbReference type="InterPro" id="IPR054350">
    <property type="entry name" value="PurT/PurK_preATP-grasp"/>
</dbReference>
<dbReference type="InterPro" id="IPR011054">
    <property type="entry name" value="Rudment_hybrid_motif"/>
</dbReference>
<dbReference type="NCBIfam" id="NF004675">
    <property type="entry name" value="PRK06019.1-1"/>
    <property type="match status" value="1"/>
</dbReference>
<dbReference type="NCBIfam" id="NF004676">
    <property type="entry name" value="PRK06019.1-2"/>
    <property type="match status" value="1"/>
</dbReference>
<dbReference type="NCBIfam" id="NF004679">
    <property type="entry name" value="PRK06019.1-5"/>
    <property type="match status" value="1"/>
</dbReference>
<dbReference type="NCBIfam" id="TIGR01161">
    <property type="entry name" value="purK"/>
    <property type="match status" value="1"/>
</dbReference>
<dbReference type="PANTHER" id="PTHR11609:SF5">
    <property type="entry name" value="PHOSPHORIBOSYLAMINOIMIDAZOLE CARBOXYLASE"/>
    <property type="match status" value="1"/>
</dbReference>
<dbReference type="PANTHER" id="PTHR11609">
    <property type="entry name" value="PURINE BIOSYNTHESIS PROTEIN 6/7, PUR6/7"/>
    <property type="match status" value="1"/>
</dbReference>
<dbReference type="Pfam" id="PF02222">
    <property type="entry name" value="ATP-grasp"/>
    <property type="match status" value="1"/>
</dbReference>
<dbReference type="Pfam" id="PF17769">
    <property type="entry name" value="PurK_C"/>
    <property type="match status" value="1"/>
</dbReference>
<dbReference type="Pfam" id="PF22660">
    <property type="entry name" value="RS_preATP-grasp-like"/>
    <property type="match status" value="1"/>
</dbReference>
<dbReference type="SUPFAM" id="SSF56059">
    <property type="entry name" value="Glutathione synthetase ATP-binding domain-like"/>
    <property type="match status" value="1"/>
</dbReference>
<dbReference type="SUPFAM" id="SSF52440">
    <property type="entry name" value="PreATP-grasp domain"/>
    <property type="match status" value="1"/>
</dbReference>
<dbReference type="SUPFAM" id="SSF51246">
    <property type="entry name" value="Rudiment single hybrid motif"/>
    <property type="match status" value="1"/>
</dbReference>
<dbReference type="PROSITE" id="PS50975">
    <property type="entry name" value="ATP_GRASP"/>
    <property type="match status" value="1"/>
</dbReference>
<accession>Q6GAE8</accession>
<evidence type="ECO:0000255" key="1">
    <source>
        <dbReference type="HAMAP-Rule" id="MF_01928"/>
    </source>
</evidence>
<gene>
    <name evidence="1" type="primary">purK</name>
    <name type="ordered locus">SAS1001</name>
</gene>
<keyword id="KW-0067">ATP-binding</keyword>
<keyword id="KW-0436">Ligase</keyword>
<keyword id="KW-0547">Nucleotide-binding</keyword>
<keyword id="KW-0658">Purine biosynthesis</keyword>
<sequence>MSFNKLKFGATIGIIGGGQLGKMMAQSAQKMGYKVVVLDPSEDCPCRYVAHEFIQAKYDDEKALNQLGQKCDVITYEFENISAQQLKLLCEKYNIPQGYQAIQLLQDRLTEKETLKSAGTKVVPFISVKESTDIDKAIETLGYPFIVKTRFGGYDGKGQVLINNEKDLQEGFKLIETSECVAEKYLNIKKEVSLTVTRGNNNQITFFPLQENEHRNQILFKTIVPARIDKTAEAKEQVNKIIQSIHFIGTFTVEFFIDSNNQLYVNEIAPRPHNSGHYSIEACDYSQFDTHILAVTGQSLPNSIELLKPAVMMNLLGKDLDLLENEFNEHPEWHLHIYGKSERKDSRKMGHMTVLTNDVNQTEQDMYAKFEGSN</sequence>
<proteinExistence type="inferred from homology"/>
<organism>
    <name type="scientific">Staphylococcus aureus (strain MSSA476)</name>
    <dbReference type="NCBI Taxonomy" id="282459"/>
    <lineage>
        <taxon>Bacteria</taxon>
        <taxon>Bacillati</taxon>
        <taxon>Bacillota</taxon>
        <taxon>Bacilli</taxon>
        <taxon>Bacillales</taxon>
        <taxon>Staphylococcaceae</taxon>
        <taxon>Staphylococcus</taxon>
    </lineage>
</organism>
<comment type="function">
    <text evidence="1">Catalyzes the ATP-dependent conversion of 5-aminoimidazole ribonucleotide (AIR) and HCO(3)(-) to N5-carboxyaminoimidazole ribonucleotide (N5-CAIR).</text>
</comment>
<comment type="catalytic activity">
    <reaction evidence="1">
        <text>5-amino-1-(5-phospho-beta-D-ribosyl)imidazole + hydrogencarbonate + ATP = 5-carboxyamino-1-(5-phospho-D-ribosyl)imidazole + ADP + phosphate + 2 H(+)</text>
        <dbReference type="Rhea" id="RHEA:19317"/>
        <dbReference type="ChEBI" id="CHEBI:15378"/>
        <dbReference type="ChEBI" id="CHEBI:17544"/>
        <dbReference type="ChEBI" id="CHEBI:30616"/>
        <dbReference type="ChEBI" id="CHEBI:43474"/>
        <dbReference type="ChEBI" id="CHEBI:58730"/>
        <dbReference type="ChEBI" id="CHEBI:137981"/>
        <dbReference type="ChEBI" id="CHEBI:456216"/>
        <dbReference type="EC" id="6.3.4.18"/>
    </reaction>
</comment>
<comment type="pathway">
    <text evidence="1">Purine metabolism; IMP biosynthesis via de novo pathway; 5-amino-1-(5-phospho-D-ribosyl)imidazole-4-carboxylate from 5-amino-1-(5-phospho-D-ribosyl)imidazole (N5-CAIR route): step 1/2.</text>
</comment>
<comment type="subunit">
    <text evidence="1">Homodimer.</text>
</comment>
<comment type="similarity">
    <text evidence="1">Belongs to the PurK/PurT family.</text>
</comment>
<protein>
    <recommendedName>
        <fullName evidence="1">N5-carboxyaminoimidazole ribonucleotide synthase</fullName>
        <shortName evidence="1">N5-CAIR synthase</shortName>
        <ecNumber evidence="1">6.3.4.18</ecNumber>
    </recommendedName>
    <alternativeName>
        <fullName evidence="1">5-(carboxyamino)imidazole ribonucleotide synthetase</fullName>
    </alternativeName>
</protein>
<feature type="chain" id="PRO_0000075007" description="N5-carboxyaminoimidazole ribonucleotide synthase">
    <location>
        <begin position="1"/>
        <end position="374"/>
    </location>
</feature>
<feature type="domain" description="ATP-grasp" evidence="1">
    <location>
        <begin position="112"/>
        <end position="296"/>
    </location>
</feature>
<feature type="binding site" evidence="1">
    <location>
        <position position="108"/>
    </location>
    <ligand>
        <name>ATP</name>
        <dbReference type="ChEBI" id="CHEBI:30616"/>
    </ligand>
</feature>
<feature type="binding site" evidence="1">
    <location>
        <position position="148"/>
    </location>
    <ligand>
        <name>ATP</name>
        <dbReference type="ChEBI" id="CHEBI:30616"/>
    </ligand>
</feature>
<feature type="binding site" evidence="1">
    <location>
        <begin position="153"/>
        <end position="159"/>
    </location>
    <ligand>
        <name>ATP</name>
        <dbReference type="ChEBI" id="CHEBI:30616"/>
    </ligand>
</feature>
<feature type="binding site" evidence="1">
    <location>
        <begin position="183"/>
        <end position="186"/>
    </location>
    <ligand>
        <name>ATP</name>
        <dbReference type="ChEBI" id="CHEBI:30616"/>
    </ligand>
</feature>
<feature type="binding site" evidence="1">
    <location>
        <position position="191"/>
    </location>
    <ligand>
        <name>ATP</name>
        <dbReference type="ChEBI" id="CHEBI:30616"/>
    </ligand>
</feature>
<feature type="binding site" evidence="1">
    <location>
        <position position="214"/>
    </location>
    <ligand>
        <name>ATP</name>
        <dbReference type="ChEBI" id="CHEBI:30616"/>
    </ligand>
</feature>
<feature type="binding site" evidence="1">
    <location>
        <begin position="266"/>
        <end position="267"/>
    </location>
    <ligand>
        <name>ATP</name>
        <dbReference type="ChEBI" id="CHEBI:30616"/>
    </ligand>
</feature>
<name>PURK_STAAS</name>
<reference key="1">
    <citation type="journal article" date="2004" name="Proc. Natl. Acad. Sci. U.S.A.">
        <title>Complete genomes of two clinical Staphylococcus aureus strains: evidence for the rapid evolution of virulence and drug resistance.</title>
        <authorList>
            <person name="Holden M.T.G."/>
            <person name="Feil E.J."/>
            <person name="Lindsay J.A."/>
            <person name="Peacock S.J."/>
            <person name="Day N.P.J."/>
            <person name="Enright M.C."/>
            <person name="Foster T.J."/>
            <person name="Moore C.E."/>
            <person name="Hurst L."/>
            <person name="Atkin R."/>
            <person name="Barron A."/>
            <person name="Bason N."/>
            <person name="Bentley S.D."/>
            <person name="Chillingworth C."/>
            <person name="Chillingworth T."/>
            <person name="Churcher C."/>
            <person name="Clark L."/>
            <person name="Corton C."/>
            <person name="Cronin A."/>
            <person name="Doggett J."/>
            <person name="Dowd L."/>
            <person name="Feltwell T."/>
            <person name="Hance Z."/>
            <person name="Harris B."/>
            <person name="Hauser H."/>
            <person name="Holroyd S."/>
            <person name="Jagels K."/>
            <person name="James K.D."/>
            <person name="Lennard N."/>
            <person name="Line A."/>
            <person name="Mayes R."/>
            <person name="Moule S."/>
            <person name="Mungall K."/>
            <person name="Ormond D."/>
            <person name="Quail M.A."/>
            <person name="Rabbinowitsch E."/>
            <person name="Rutherford K.M."/>
            <person name="Sanders M."/>
            <person name="Sharp S."/>
            <person name="Simmonds M."/>
            <person name="Stevens K."/>
            <person name="Whitehead S."/>
            <person name="Barrell B.G."/>
            <person name="Spratt B.G."/>
            <person name="Parkhill J."/>
        </authorList>
    </citation>
    <scope>NUCLEOTIDE SEQUENCE [LARGE SCALE GENOMIC DNA]</scope>
    <source>
        <strain>MSSA476</strain>
    </source>
</reference>